<evidence type="ECO:0000250" key="1"/>
<evidence type="ECO:0000305" key="2"/>
<name>NAS4_ARATH</name>
<accession>Q9C7X5</accession>
<reference key="1">
    <citation type="journal article" date="2000" name="Nature">
        <title>Sequence and analysis of chromosome 1 of the plant Arabidopsis thaliana.</title>
        <authorList>
            <person name="Theologis A."/>
            <person name="Ecker J.R."/>
            <person name="Palm C.J."/>
            <person name="Federspiel N.A."/>
            <person name="Kaul S."/>
            <person name="White O."/>
            <person name="Alonso J."/>
            <person name="Altafi H."/>
            <person name="Araujo R."/>
            <person name="Bowman C.L."/>
            <person name="Brooks S.Y."/>
            <person name="Buehler E."/>
            <person name="Chan A."/>
            <person name="Chao Q."/>
            <person name="Chen H."/>
            <person name="Cheuk R.F."/>
            <person name="Chin C.W."/>
            <person name="Chung M.K."/>
            <person name="Conn L."/>
            <person name="Conway A.B."/>
            <person name="Conway A.R."/>
            <person name="Creasy T.H."/>
            <person name="Dewar K."/>
            <person name="Dunn P."/>
            <person name="Etgu P."/>
            <person name="Feldblyum T.V."/>
            <person name="Feng J.-D."/>
            <person name="Fong B."/>
            <person name="Fujii C.Y."/>
            <person name="Gill J.E."/>
            <person name="Goldsmith A.D."/>
            <person name="Haas B."/>
            <person name="Hansen N.F."/>
            <person name="Hughes B."/>
            <person name="Huizar L."/>
            <person name="Hunter J.L."/>
            <person name="Jenkins J."/>
            <person name="Johnson-Hopson C."/>
            <person name="Khan S."/>
            <person name="Khaykin E."/>
            <person name="Kim C.J."/>
            <person name="Koo H.L."/>
            <person name="Kremenetskaia I."/>
            <person name="Kurtz D.B."/>
            <person name="Kwan A."/>
            <person name="Lam B."/>
            <person name="Langin-Hooper S."/>
            <person name="Lee A."/>
            <person name="Lee J.M."/>
            <person name="Lenz C.A."/>
            <person name="Li J.H."/>
            <person name="Li Y.-P."/>
            <person name="Lin X."/>
            <person name="Liu S.X."/>
            <person name="Liu Z.A."/>
            <person name="Luros J.S."/>
            <person name="Maiti R."/>
            <person name="Marziali A."/>
            <person name="Militscher J."/>
            <person name="Miranda M."/>
            <person name="Nguyen M."/>
            <person name="Nierman W.C."/>
            <person name="Osborne B.I."/>
            <person name="Pai G."/>
            <person name="Peterson J."/>
            <person name="Pham P.K."/>
            <person name="Rizzo M."/>
            <person name="Rooney T."/>
            <person name="Rowley D."/>
            <person name="Sakano H."/>
            <person name="Salzberg S.L."/>
            <person name="Schwartz J.R."/>
            <person name="Shinn P."/>
            <person name="Southwick A.M."/>
            <person name="Sun H."/>
            <person name="Tallon L.J."/>
            <person name="Tambunga G."/>
            <person name="Toriumi M.J."/>
            <person name="Town C.D."/>
            <person name="Utterback T."/>
            <person name="Van Aken S."/>
            <person name="Vaysberg M."/>
            <person name="Vysotskaia V.S."/>
            <person name="Walker M."/>
            <person name="Wu D."/>
            <person name="Yu G."/>
            <person name="Fraser C.M."/>
            <person name="Venter J.C."/>
            <person name="Davis R.W."/>
        </authorList>
    </citation>
    <scope>NUCLEOTIDE SEQUENCE [LARGE SCALE GENOMIC DNA]</scope>
    <source>
        <strain>cv. Columbia</strain>
    </source>
</reference>
<reference key="2">
    <citation type="journal article" date="2017" name="Plant J.">
        <title>Araport11: a complete reannotation of the Arabidopsis thaliana reference genome.</title>
        <authorList>
            <person name="Cheng C.Y."/>
            <person name="Krishnakumar V."/>
            <person name="Chan A.P."/>
            <person name="Thibaud-Nissen F."/>
            <person name="Schobel S."/>
            <person name="Town C.D."/>
        </authorList>
    </citation>
    <scope>GENOME REANNOTATION</scope>
    <source>
        <strain>cv. Columbia</strain>
    </source>
</reference>
<reference key="3">
    <citation type="journal article" date="2003" name="Science">
        <title>Empirical analysis of transcriptional activity in the Arabidopsis genome.</title>
        <authorList>
            <person name="Yamada K."/>
            <person name="Lim J."/>
            <person name="Dale J.M."/>
            <person name="Chen H."/>
            <person name="Shinn P."/>
            <person name="Palm C.J."/>
            <person name="Southwick A.M."/>
            <person name="Wu H.C."/>
            <person name="Kim C.J."/>
            <person name="Nguyen M."/>
            <person name="Pham P.K."/>
            <person name="Cheuk R.F."/>
            <person name="Karlin-Newmann G."/>
            <person name="Liu S.X."/>
            <person name="Lam B."/>
            <person name="Sakano H."/>
            <person name="Wu T."/>
            <person name="Yu G."/>
            <person name="Miranda M."/>
            <person name="Quach H.L."/>
            <person name="Tripp M."/>
            <person name="Chang C.H."/>
            <person name="Lee J.M."/>
            <person name="Toriumi M.J."/>
            <person name="Chan M.M."/>
            <person name="Tang C.C."/>
            <person name="Onodera C.S."/>
            <person name="Deng J.M."/>
            <person name="Akiyama K."/>
            <person name="Ansari Y."/>
            <person name="Arakawa T."/>
            <person name="Banh J."/>
            <person name="Banno F."/>
            <person name="Bowser L."/>
            <person name="Brooks S.Y."/>
            <person name="Carninci P."/>
            <person name="Chao Q."/>
            <person name="Choy N."/>
            <person name="Enju A."/>
            <person name="Goldsmith A.D."/>
            <person name="Gurjal M."/>
            <person name="Hansen N.F."/>
            <person name="Hayashizaki Y."/>
            <person name="Johnson-Hopson C."/>
            <person name="Hsuan V.W."/>
            <person name="Iida K."/>
            <person name="Karnes M."/>
            <person name="Khan S."/>
            <person name="Koesema E."/>
            <person name="Ishida J."/>
            <person name="Jiang P.X."/>
            <person name="Jones T."/>
            <person name="Kawai J."/>
            <person name="Kamiya A."/>
            <person name="Meyers C."/>
            <person name="Nakajima M."/>
            <person name="Narusaka M."/>
            <person name="Seki M."/>
            <person name="Sakurai T."/>
            <person name="Satou M."/>
            <person name="Tamse R."/>
            <person name="Vaysberg M."/>
            <person name="Wallender E.K."/>
            <person name="Wong C."/>
            <person name="Yamamura Y."/>
            <person name="Yuan S."/>
            <person name="Shinozaki K."/>
            <person name="Davis R.W."/>
            <person name="Theologis A."/>
            <person name="Ecker J.R."/>
        </authorList>
    </citation>
    <scope>NUCLEOTIDE SEQUENCE [LARGE SCALE MRNA]</scope>
    <source>
        <strain>cv. Columbia</strain>
    </source>
</reference>
<dbReference type="EC" id="2.5.1.43"/>
<dbReference type="EMBL" id="AC058785">
    <property type="protein sequence ID" value="AAG51505.1"/>
    <property type="molecule type" value="Genomic_DNA"/>
</dbReference>
<dbReference type="EMBL" id="CP002684">
    <property type="protein sequence ID" value="AEE33394.1"/>
    <property type="molecule type" value="Genomic_DNA"/>
</dbReference>
<dbReference type="EMBL" id="AY099758">
    <property type="protein sequence ID" value="AAM20609.1"/>
    <property type="molecule type" value="mRNA"/>
</dbReference>
<dbReference type="EMBL" id="AY128890">
    <property type="protein sequence ID" value="AAM91290.1"/>
    <property type="molecule type" value="mRNA"/>
</dbReference>
<dbReference type="PIR" id="B96606">
    <property type="entry name" value="B96606"/>
</dbReference>
<dbReference type="RefSeq" id="NP_176038.1">
    <property type="nucleotide sequence ID" value="NM_104521.3"/>
</dbReference>
<dbReference type="SMR" id="Q9C7X5"/>
<dbReference type="BioGRID" id="27321">
    <property type="interactions" value="1"/>
</dbReference>
<dbReference type="FunCoup" id="Q9C7X5">
    <property type="interactions" value="122"/>
</dbReference>
<dbReference type="IntAct" id="Q9C7X5">
    <property type="interactions" value="1"/>
</dbReference>
<dbReference type="STRING" id="3702.Q9C7X5"/>
<dbReference type="iPTMnet" id="Q9C7X5"/>
<dbReference type="PaxDb" id="3702-AT1G56430.1"/>
<dbReference type="ProteomicsDB" id="251300"/>
<dbReference type="DNASU" id="842096"/>
<dbReference type="EnsemblPlants" id="AT1G56430.1">
    <property type="protein sequence ID" value="AT1G56430.1"/>
    <property type="gene ID" value="AT1G56430"/>
</dbReference>
<dbReference type="GeneID" id="842096"/>
<dbReference type="Gramene" id="AT1G56430.1">
    <property type="protein sequence ID" value="AT1G56430.1"/>
    <property type="gene ID" value="AT1G56430"/>
</dbReference>
<dbReference type="KEGG" id="ath:AT1G56430"/>
<dbReference type="Araport" id="AT1G56430"/>
<dbReference type="TAIR" id="AT1G56430">
    <property type="gene designation" value="NAS4"/>
</dbReference>
<dbReference type="eggNOG" id="ENOG502QTU6">
    <property type="taxonomic scope" value="Eukaryota"/>
</dbReference>
<dbReference type="HOGENOM" id="CLU_031919_1_1_1"/>
<dbReference type="InParanoid" id="Q9C7X5"/>
<dbReference type="OMA" id="NIDMSPT"/>
<dbReference type="PhylomeDB" id="Q9C7X5"/>
<dbReference type="BioCyc" id="ARA:AT1G56430-MONOMER"/>
<dbReference type="PRO" id="PR:Q9C7X5"/>
<dbReference type="Proteomes" id="UP000006548">
    <property type="component" value="Chromosome 1"/>
</dbReference>
<dbReference type="ExpressionAtlas" id="Q9C7X5">
    <property type="expression patterns" value="baseline and differential"/>
</dbReference>
<dbReference type="GO" id="GO:0030410">
    <property type="term" value="F:nicotianamine synthase activity"/>
    <property type="evidence" value="ECO:0000316"/>
    <property type="project" value="TAIR"/>
</dbReference>
<dbReference type="GO" id="GO:0030418">
    <property type="term" value="P:nicotianamine biosynthetic process"/>
    <property type="evidence" value="ECO:0000316"/>
    <property type="project" value="TAIR"/>
</dbReference>
<dbReference type="GO" id="GO:0010233">
    <property type="term" value="P:phloem transport"/>
    <property type="evidence" value="ECO:0000316"/>
    <property type="project" value="TAIR"/>
</dbReference>
<dbReference type="GO" id="GO:0009555">
    <property type="term" value="P:pollen development"/>
    <property type="evidence" value="ECO:0000316"/>
    <property type="project" value="TAIR"/>
</dbReference>
<dbReference type="GO" id="GO:0009860">
    <property type="term" value="P:pollen tube growth"/>
    <property type="evidence" value="ECO:0000316"/>
    <property type="project" value="TAIR"/>
</dbReference>
<dbReference type="FunFam" id="3.40.50.150:FF:000182">
    <property type="entry name" value="Nicotianamine synthase"/>
    <property type="match status" value="1"/>
</dbReference>
<dbReference type="Gene3D" id="3.40.50.150">
    <property type="entry name" value="Vaccinia Virus protein VP39"/>
    <property type="match status" value="1"/>
</dbReference>
<dbReference type="InterPro" id="IPR004298">
    <property type="entry name" value="Nicotian_synth"/>
</dbReference>
<dbReference type="InterPro" id="IPR029063">
    <property type="entry name" value="SAM-dependent_MTases_sf"/>
</dbReference>
<dbReference type="PANTHER" id="PTHR32266">
    <property type="entry name" value="NICOTIANAMINE SYNTHASE 3"/>
    <property type="match status" value="1"/>
</dbReference>
<dbReference type="PANTHER" id="PTHR32266:SF16">
    <property type="entry name" value="NICOTIANAMINE SYNTHASE 4-RELATED"/>
    <property type="match status" value="1"/>
</dbReference>
<dbReference type="Pfam" id="PF03059">
    <property type="entry name" value="NAS"/>
    <property type="match status" value="1"/>
</dbReference>
<dbReference type="SUPFAM" id="SSF53335">
    <property type="entry name" value="S-adenosyl-L-methionine-dependent methyltransferases"/>
    <property type="match status" value="1"/>
</dbReference>
<dbReference type="PROSITE" id="PS51142">
    <property type="entry name" value="NAS"/>
    <property type="match status" value="1"/>
</dbReference>
<keyword id="KW-1185">Reference proteome</keyword>
<keyword id="KW-0949">S-adenosyl-L-methionine</keyword>
<keyword id="KW-0808">Transferase</keyword>
<protein>
    <recommendedName>
        <fullName>Probable nicotianamine synthase 4</fullName>
        <ecNumber>2.5.1.43</ecNumber>
    </recommendedName>
    <alternativeName>
        <fullName>S-adenosyl-L-methionine:S-adenosyl-L-methionine:S-adenosyl-methionine 3-amino-3-carboxypropyltransferase 4</fullName>
    </alternativeName>
</protein>
<comment type="function">
    <text evidence="1">Synthesizes nicotianamine, a polyamine which serves as a sensor for the physiological iron status within the plant, and/or might be involved in the transport of iron.</text>
</comment>
<comment type="catalytic activity">
    <reaction>
        <text>3 S-adenosyl-L-methionine = nicotianamine + 3 S-methyl-5'-thioadenosine + 3 H(+)</text>
        <dbReference type="Rhea" id="RHEA:16481"/>
        <dbReference type="ChEBI" id="CHEBI:15378"/>
        <dbReference type="ChEBI" id="CHEBI:17509"/>
        <dbReference type="ChEBI" id="CHEBI:58249"/>
        <dbReference type="ChEBI" id="CHEBI:59789"/>
        <dbReference type="EC" id="2.5.1.43"/>
    </reaction>
</comment>
<comment type="similarity">
    <text evidence="2">Belongs to the nicotianamine synthase (NAS)-like family.</text>
</comment>
<gene>
    <name type="primary">NAS4</name>
    <name type="ordered locus">At1g56430</name>
    <name type="ORF">F13N6.10</name>
</gene>
<sequence>MGYCQDDQLVNKICDLYEKISKLETLKPCEDVDTLFKQLVSTCIPPNPNIDVTKMSENIQEMRSNLIKICGEAEGYLEHHFSSILTSFEDNPLHHLNLFPYYNNYLKLSKLEFDLLEQNLNGFVPRTVAFIGSGPLPLTSVVLASSHLKDSIFHNFDIDPSANMVAARLVSSDPDLSQRMFFHTVDIMDVTESLKGFDVVFLAALVGMDKKEKVKVVEHLEKHMSPGALLMLRSAHGPRAFLYPIVEPCDLEGFEVLSVYHPTDEVINSIVISRKLGEDANGVVHDHIDQASDLACNCSKIHVIMNKKKSIIEEFAGANEEQLT</sequence>
<proteinExistence type="evidence at transcript level"/>
<feature type="chain" id="PRO_0000212703" description="Probable nicotianamine synthase 4">
    <location>
        <begin position="1"/>
        <end position="324"/>
    </location>
</feature>
<organism>
    <name type="scientific">Arabidopsis thaliana</name>
    <name type="common">Mouse-ear cress</name>
    <dbReference type="NCBI Taxonomy" id="3702"/>
    <lineage>
        <taxon>Eukaryota</taxon>
        <taxon>Viridiplantae</taxon>
        <taxon>Streptophyta</taxon>
        <taxon>Embryophyta</taxon>
        <taxon>Tracheophyta</taxon>
        <taxon>Spermatophyta</taxon>
        <taxon>Magnoliopsida</taxon>
        <taxon>eudicotyledons</taxon>
        <taxon>Gunneridae</taxon>
        <taxon>Pentapetalae</taxon>
        <taxon>rosids</taxon>
        <taxon>malvids</taxon>
        <taxon>Brassicales</taxon>
        <taxon>Brassicaceae</taxon>
        <taxon>Camelineae</taxon>
        <taxon>Arabidopsis</taxon>
    </lineage>
</organism>